<evidence type="ECO:0000255" key="1">
    <source>
        <dbReference type="HAMAP-Rule" id="MF_00412"/>
    </source>
</evidence>
<name>PROA_LIMRD</name>
<keyword id="KW-0028">Amino-acid biosynthesis</keyword>
<keyword id="KW-0963">Cytoplasm</keyword>
<keyword id="KW-0521">NADP</keyword>
<keyword id="KW-0560">Oxidoreductase</keyword>
<keyword id="KW-0641">Proline biosynthesis</keyword>
<keyword id="KW-1185">Reference proteome</keyword>
<organism>
    <name type="scientific">Limosilactobacillus reuteri (strain DSM 20016)</name>
    <name type="common">Lactobacillus reuteri</name>
    <dbReference type="NCBI Taxonomy" id="557436"/>
    <lineage>
        <taxon>Bacteria</taxon>
        <taxon>Bacillati</taxon>
        <taxon>Bacillota</taxon>
        <taxon>Bacilli</taxon>
        <taxon>Lactobacillales</taxon>
        <taxon>Lactobacillaceae</taxon>
        <taxon>Limosilactobacillus</taxon>
    </lineage>
</organism>
<comment type="function">
    <text evidence="1">Catalyzes the NADPH-dependent reduction of L-glutamate 5-phosphate into L-glutamate 5-semialdehyde and phosphate. The product spontaneously undergoes cyclization to form 1-pyrroline-5-carboxylate.</text>
</comment>
<comment type="catalytic activity">
    <reaction evidence="1">
        <text>L-glutamate 5-semialdehyde + phosphate + NADP(+) = L-glutamyl 5-phosphate + NADPH + H(+)</text>
        <dbReference type="Rhea" id="RHEA:19541"/>
        <dbReference type="ChEBI" id="CHEBI:15378"/>
        <dbReference type="ChEBI" id="CHEBI:43474"/>
        <dbReference type="ChEBI" id="CHEBI:57783"/>
        <dbReference type="ChEBI" id="CHEBI:58066"/>
        <dbReference type="ChEBI" id="CHEBI:58274"/>
        <dbReference type="ChEBI" id="CHEBI:58349"/>
        <dbReference type="EC" id="1.2.1.41"/>
    </reaction>
</comment>
<comment type="pathway">
    <text evidence="1">Amino-acid biosynthesis; L-proline biosynthesis; L-glutamate 5-semialdehyde from L-glutamate: step 2/2.</text>
</comment>
<comment type="subcellular location">
    <subcellularLocation>
        <location evidence="1">Cytoplasm</location>
    </subcellularLocation>
</comment>
<comment type="similarity">
    <text evidence="1">Belongs to the gamma-glutamyl phosphate reductase family.</text>
</comment>
<sequence length="414" mass="45255">MNQDLIAIGKRAQNAANKLALMNTATKNKALLQLADDLIKNKNQIIAANQQDLAAATQMPTKFTDRLMVNSQRIADMANGLRTIADLNDPTSQIDKGWITKDGLQILQRRVPLGVIGIIFEARPNVTVDATGLTFKSGNAVILRGGKEAIQTNTALVKILRESLQSQHLPVDAVQLITDTSHAIADEMMNLTDYIDVLIPRGGRALIQRVVTTATVPVIETGAGNCHIYIDKDADLTMATNITVNAKVQRPSVCNAAEKLLIHRDIAAKFLPVIAKALMEHGVQLRGDETACQLVSTIRPVTEEDWDTEYNDLIMAVKIVDSLDDAISHINHYSTHHSESIITNNITRGRYFQQAINSACVYVNASTRFTDGGEFGFGAEIGISTQKLHARGPMGLQQLTTIKYEITGNGQIRK</sequence>
<reference key="1">
    <citation type="journal article" date="2011" name="PLoS Genet.">
        <title>The evolution of host specialization in the vertebrate gut symbiont Lactobacillus reuteri.</title>
        <authorList>
            <person name="Frese S.A."/>
            <person name="Benson A.K."/>
            <person name="Tannock G.W."/>
            <person name="Loach D.M."/>
            <person name="Kim J."/>
            <person name="Zhang M."/>
            <person name="Oh P.L."/>
            <person name="Heng N.C."/>
            <person name="Patil P.B."/>
            <person name="Juge N."/>
            <person name="Mackenzie D.A."/>
            <person name="Pearson B.M."/>
            <person name="Lapidus A."/>
            <person name="Dalin E."/>
            <person name="Tice H."/>
            <person name="Goltsman E."/>
            <person name="Land M."/>
            <person name="Hauser L."/>
            <person name="Ivanova N."/>
            <person name="Kyrpides N.C."/>
            <person name="Walter J."/>
        </authorList>
    </citation>
    <scope>NUCLEOTIDE SEQUENCE [LARGE SCALE GENOMIC DNA]</scope>
    <source>
        <strain>DSM 20016</strain>
    </source>
</reference>
<protein>
    <recommendedName>
        <fullName evidence="1">Gamma-glutamyl phosphate reductase</fullName>
        <shortName evidence="1">GPR</shortName>
        <ecNumber evidence="1">1.2.1.41</ecNumber>
    </recommendedName>
    <alternativeName>
        <fullName evidence="1">Glutamate-5-semialdehyde dehydrogenase</fullName>
    </alternativeName>
    <alternativeName>
        <fullName evidence="1">Glutamyl-gamma-semialdehyde dehydrogenase</fullName>
        <shortName evidence="1">GSA dehydrogenase</shortName>
    </alternativeName>
</protein>
<gene>
    <name evidence="1" type="primary">proA</name>
    <name type="ordered locus">Lreu_0345</name>
</gene>
<proteinExistence type="inferred from homology"/>
<dbReference type="EC" id="1.2.1.41" evidence="1"/>
<dbReference type="EMBL" id="CP000705">
    <property type="protein sequence ID" value="ABQ82614.1"/>
    <property type="molecule type" value="Genomic_DNA"/>
</dbReference>
<dbReference type="RefSeq" id="WP_011953397.1">
    <property type="nucleotide sequence ID" value="NC_009513.1"/>
</dbReference>
<dbReference type="SMR" id="A5VIE0"/>
<dbReference type="STRING" id="557436.Lreu_0345"/>
<dbReference type="KEGG" id="lre:Lreu_0345"/>
<dbReference type="PATRIC" id="fig|557436.17.peg.1467"/>
<dbReference type="eggNOG" id="COG0014">
    <property type="taxonomic scope" value="Bacteria"/>
</dbReference>
<dbReference type="HOGENOM" id="CLU_030231_0_0_9"/>
<dbReference type="UniPathway" id="UPA00098">
    <property type="reaction ID" value="UER00360"/>
</dbReference>
<dbReference type="Proteomes" id="UP000001991">
    <property type="component" value="Chromosome"/>
</dbReference>
<dbReference type="GO" id="GO:0005737">
    <property type="term" value="C:cytoplasm"/>
    <property type="evidence" value="ECO:0007669"/>
    <property type="project" value="UniProtKB-SubCell"/>
</dbReference>
<dbReference type="GO" id="GO:0004350">
    <property type="term" value="F:glutamate-5-semialdehyde dehydrogenase activity"/>
    <property type="evidence" value="ECO:0007669"/>
    <property type="project" value="UniProtKB-UniRule"/>
</dbReference>
<dbReference type="GO" id="GO:0050661">
    <property type="term" value="F:NADP binding"/>
    <property type="evidence" value="ECO:0007669"/>
    <property type="project" value="InterPro"/>
</dbReference>
<dbReference type="GO" id="GO:0055129">
    <property type="term" value="P:L-proline biosynthetic process"/>
    <property type="evidence" value="ECO:0007669"/>
    <property type="project" value="UniProtKB-UniRule"/>
</dbReference>
<dbReference type="CDD" id="cd07079">
    <property type="entry name" value="ALDH_F18-19_ProA-GPR"/>
    <property type="match status" value="1"/>
</dbReference>
<dbReference type="FunFam" id="3.40.309.10:FF:000006">
    <property type="entry name" value="Gamma-glutamyl phosphate reductase"/>
    <property type="match status" value="1"/>
</dbReference>
<dbReference type="Gene3D" id="3.40.605.10">
    <property type="entry name" value="Aldehyde Dehydrogenase, Chain A, domain 1"/>
    <property type="match status" value="1"/>
</dbReference>
<dbReference type="Gene3D" id="3.40.309.10">
    <property type="entry name" value="Aldehyde Dehydrogenase, Chain A, domain 2"/>
    <property type="match status" value="1"/>
</dbReference>
<dbReference type="HAMAP" id="MF_00412">
    <property type="entry name" value="ProA"/>
    <property type="match status" value="1"/>
</dbReference>
<dbReference type="InterPro" id="IPR016161">
    <property type="entry name" value="Ald_DH/histidinol_DH"/>
</dbReference>
<dbReference type="InterPro" id="IPR016163">
    <property type="entry name" value="Ald_DH_C"/>
</dbReference>
<dbReference type="InterPro" id="IPR016162">
    <property type="entry name" value="Ald_DH_N"/>
</dbReference>
<dbReference type="InterPro" id="IPR015590">
    <property type="entry name" value="Aldehyde_DH_dom"/>
</dbReference>
<dbReference type="InterPro" id="IPR020593">
    <property type="entry name" value="G-glutamylP_reductase_CS"/>
</dbReference>
<dbReference type="InterPro" id="IPR012134">
    <property type="entry name" value="Glu-5-SA_DH"/>
</dbReference>
<dbReference type="InterPro" id="IPR000965">
    <property type="entry name" value="GPR_dom"/>
</dbReference>
<dbReference type="NCBIfam" id="NF001221">
    <property type="entry name" value="PRK00197.1"/>
    <property type="match status" value="1"/>
</dbReference>
<dbReference type="NCBIfam" id="TIGR00407">
    <property type="entry name" value="proA"/>
    <property type="match status" value="1"/>
</dbReference>
<dbReference type="PANTHER" id="PTHR11063:SF8">
    <property type="entry name" value="DELTA-1-PYRROLINE-5-CARBOXYLATE SYNTHASE"/>
    <property type="match status" value="1"/>
</dbReference>
<dbReference type="PANTHER" id="PTHR11063">
    <property type="entry name" value="GLUTAMATE SEMIALDEHYDE DEHYDROGENASE"/>
    <property type="match status" value="1"/>
</dbReference>
<dbReference type="Pfam" id="PF00171">
    <property type="entry name" value="Aldedh"/>
    <property type="match status" value="1"/>
</dbReference>
<dbReference type="PIRSF" id="PIRSF000151">
    <property type="entry name" value="GPR"/>
    <property type="match status" value="1"/>
</dbReference>
<dbReference type="SUPFAM" id="SSF53720">
    <property type="entry name" value="ALDH-like"/>
    <property type="match status" value="1"/>
</dbReference>
<dbReference type="PROSITE" id="PS01223">
    <property type="entry name" value="PROA"/>
    <property type="match status" value="1"/>
</dbReference>
<feature type="chain" id="PRO_1000060842" description="Gamma-glutamyl phosphate reductase">
    <location>
        <begin position="1"/>
        <end position="414"/>
    </location>
</feature>
<accession>A5VIE0</accession>